<name>NDB3A_ARATH</name>
<sequence>MAKPLGTTGEFFRRRDEWRKHPMLSNQMRHALPGIGIGVGAFCVYLVGEQIYSKLMAPSSQSSHQKQPAPSH</sequence>
<protein>
    <recommendedName>
        <fullName>NADH dehydrogenase [ubiquinone] 1 beta subcomplex subunit 3-A</fullName>
    </recommendedName>
</protein>
<evidence type="ECO:0000250" key="1"/>
<evidence type="ECO:0000255" key="2"/>
<evidence type="ECO:0000305" key="3"/>
<evidence type="ECO:0007829" key="4">
    <source>
        <dbReference type="PDB" id="8BEH"/>
    </source>
</evidence>
<reference key="1">
    <citation type="journal article" date="1999" name="Nature">
        <title>Sequence and analysis of chromosome 2 of the plant Arabidopsis thaliana.</title>
        <authorList>
            <person name="Lin X."/>
            <person name="Kaul S."/>
            <person name="Rounsley S.D."/>
            <person name="Shea T.P."/>
            <person name="Benito M.-I."/>
            <person name="Town C.D."/>
            <person name="Fujii C.Y."/>
            <person name="Mason T.M."/>
            <person name="Bowman C.L."/>
            <person name="Barnstead M.E."/>
            <person name="Feldblyum T.V."/>
            <person name="Buell C.R."/>
            <person name="Ketchum K.A."/>
            <person name="Lee J.J."/>
            <person name="Ronning C.M."/>
            <person name="Koo H.L."/>
            <person name="Moffat K.S."/>
            <person name="Cronin L.A."/>
            <person name="Shen M."/>
            <person name="Pai G."/>
            <person name="Van Aken S."/>
            <person name="Umayam L."/>
            <person name="Tallon L.J."/>
            <person name="Gill J.E."/>
            <person name="Adams M.D."/>
            <person name="Carrera A.J."/>
            <person name="Creasy T.H."/>
            <person name="Goodman H.M."/>
            <person name="Somerville C.R."/>
            <person name="Copenhaver G.P."/>
            <person name="Preuss D."/>
            <person name="Nierman W.C."/>
            <person name="White O."/>
            <person name="Eisen J.A."/>
            <person name="Salzberg S.L."/>
            <person name="Fraser C.M."/>
            <person name="Venter J.C."/>
        </authorList>
    </citation>
    <scope>NUCLEOTIDE SEQUENCE [LARGE SCALE GENOMIC DNA]</scope>
    <source>
        <strain>cv. Columbia</strain>
    </source>
</reference>
<reference key="2">
    <citation type="journal article" date="2017" name="Plant J.">
        <title>Araport11: a complete reannotation of the Arabidopsis thaliana reference genome.</title>
        <authorList>
            <person name="Cheng C.Y."/>
            <person name="Krishnakumar V."/>
            <person name="Chan A.P."/>
            <person name="Thibaud-Nissen F."/>
            <person name="Schobel S."/>
            <person name="Town C.D."/>
        </authorList>
    </citation>
    <scope>GENOME REANNOTATION</scope>
    <source>
        <strain>cv. Columbia</strain>
    </source>
</reference>
<reference key="3">
    <citation type="journal article" date="2003" name="Science">
        <title>Empirical analysis of transcriptional activity in the Arabidopsis genome.</title>
        <authorList>
            <person name="Yamada K."/>
            <person name="Lim J."/>
            <person name="Dale J.M."/>
            <person name="Chen H."/>
            <person name="Shinn P."/>
            <person name="Palm C.J."/>
            <person name="Southwick A.M."/>
            <person name="Wu H.C."/>
            <person name="Kim C.J."/>
            <person name="Nguyen M."/>
            <person name="Pham P.K."/>
            <person name="Cheuk R.F."/>
            <person name="Karlin-Newmann G."/>
            <person name="Liu S.X."/>
            <person name="Lam B."/>
            <person name="Sakano H."/>
            <person name="Wu T."/>
            <person name="Yu G."/>
            <person name="Miranda M."/>
            <person name="Quach H.L."/>
            <person name="Tripp M."/>
            <person name="Chang C.H."/>
            <person name="Lee J.M."/>
            <person name="Toriumi M.J."/>
            <person name="Chan M.M."/>
            <person name="Tang C.C."/>
            <person name="Onodera C.S."/>
            <person name="Deng J.M."/>
            <person name="Akiyama K."/>
            <person name="Ansari Y."/>
            <person name="Arakawa T."/>
            <person name="Banh J."/>
            <person name="Banno F."/>
            <person name="Bowser L."/>
            <person name="Brooks S.Y."/>
            <person name="Carninci P."/>
            <person name="Chao Q."/>
            <person name="Choy N."/>
            <person name="Enju A."/>
            <person name="Goldsmith A.D."/>
            <person name="Gurjal M."/>
            <person name="Hansen N.F."/>
            <person name="Hayashizaki Y."/>
            <person name="Johnson-Hopson C."/>
            <person name="Hsuan V.W."/>
            <person name="Iida K."/>
            <person name="Karnes M."/>
            <person name="Khan S."/>
            <person name="Koesema E."/>
            <person name="Ishida J."/>
            <person name="Jiang P.X."/>
            <person name="Jones T."/>
            <person name="Kawai J."/>
            <person name="Kamiya A."/>
            <person name="Meyers C."/>
            <person name="Nakajima M."/>
            <person name="Narusaka M."/>
            <person name="Seki M."/>
            <person name="Sakurai T."/>
            <person name="Satou M."/>
            <person name="Tamse R."/>
            <person name="Vaysberg M."/>
            <person name="Wallender E.K."/>
            <person name="Wong C."/>
            <person name="Yamamura Y."/>
            <person name="Yuan S."/>
            <person name="Shinozaki K."/>
            <person name="Davis R.W."/>
            <person name="Theologis A."/>
            <person name="Ecker J.R."/>
        </authorList>
    </citation>
    <scope>NUCLEOTIDE SEQUENCE [LARGE SCALE MRNA]</scope>
    <source>
        <strain>cv. Columbia</strain>
    </source>
</reference>
<reference key="4">
    <citation type="submission" date="2004-09" db="EMBL/GenBank/DDBJ databases">
        <title>Large-scale analysis of RIKEN Arabidopsis full-length (RAFL) cDNAs.</title>
        <authorList>
            <person name="Totoki Y."/>
            <person name="Seki M."/>
            <person name="Ishida J."/>
            <person name="Nakajima M."/>
            <person name="Enju A."/>
            <person name="Kamiya A."/>
            <person name="Narusaka M."/>
            <person name="Shin-i T."/>
            <person name="Nakagawa M."/>
            <person name="Sakamoto N."/>
            <person name="Oishi K."/>
            <person name="Kohara Y."/>
            <person name="Kobayashi M."/>
            <person name="Toyoda A."/>
            <person name="Sakaki Y."/>
            <person name="Sakurai T."/>
            <person name="Iida K."/>
            <person name="Akiyama K."/>
            <person name="Satou M."/>
            <person name="Toyoda T."/>
            <person name="Konagaya A."/>
            <person name="Carninci P."/>
            <person name="Kawai J."/>
            <person name="Hayashizaki Y."/>
            <person name="Shinozaki K."/>
        </authorList>
    </citation>
    <scope>NUCLEOTIDE SEQUENCE [LARGE SCALE MRNA]</scope>
    <source>
        <strain>cv. Columbia</strain>
    </source>
</reference>
<gene>
    <name type="ordered locus">At2g02510</name>
    <name type="ORF">T8K22.19</name>
</gene>
<organism>
    <name type="scientific">Arabidopsis thaliana</name>
    <name type="common">Mouse-ear cress</name>
    <dbReference type="NCBI Taxonomy" id="3702"/>
    <lineage>
        <taxon>Eukaryota</taxon>
        <taxon>Viridiplantae</taxon>
        <taxon>Streptophyta</taxon>
        <taxon>Embryophyta</taxon>
        <taxon>Tracheophyta</taxon>
        <taxon>Spermatophyta</taxon>
        <taxon>Magnoliopsida</taxon>
        <taxon>eudicotyledons</taxon>
        <taxon>Gunneridae</taxon>
        <taxon>Pentapetalae</taxon>
        <taxon>rosids</taxon>
        <taxon>malvids</taxon>
        <taxon>Brassicales</taxon>
        <taxon>Brassicaceae</taxon>
        <taxon>Camelineae</taxon>
        <taxon>Arabidopsis</taxon>
    </lineage>
</organism>
<proteinExistence type="evidence at protein level"/>
<accession>O64725</accession>
<comment type="function">
    <text evidence="1">Accessory subunit of the mitochondrial membrane respiratory chain NADH dehydrogenase (Complex I), that is believed not to be involved in catalysis. Complex I functions in the transfer of electrons from NADH to the respiratory chain. The immediate electron acceptor for the enzyme is believed to be ubiquinone (By similarity).</text>
</comment>
<comment type="subunit">
    <text>Complex I is composed of at least 49 different subunits.</text>
</comment>
<comment type="subcellular location">
    <subcellularLocation>
        <location evidence="1">Mitochondrion inner membrane</location>
        <topology evidence="1">Single-pass membrane protein</topology>
        <orientation evidence="1">Matrix side</orientation>
    </subcellularLocation>
</comment>
<comment type="similarity">
    <text evidence="3">Belongs to the complex I NDUFB3 subunit family.</text>
</comment>
<feature type="chain" id="PRO_0000410995" description="NADH dehydrogenase [ubiquinone] 1 beta subcomplex subunit 3-A">
    <location>
        <begin position="1"/>
        <end position="72"/>
    </location>
</feature>
<feature type="transmembrane region" description="Helical" evidence="2">
    <location>
        <begin position="31"/>
        <end position="48"/>
    </location>
</feature>
<feature type="helix" evidence="4">
    <location>
        <begin position="7"/>
        <end position="15"/>
    </location>
</feature>
<feature type="helix" evidence="4">
    <location>
        <begin position="16"/>
        <end position="20"/>
    </location>
</feature>
<feature type="turn" evidence="4">
    <location>
        <begin position="22"/>
        <end position="24"/>
    </location>
</feature>
<feature type="helix" evidence="4">
    <location>
        <begin position="27"/>
        <end position="30"/>
    </location>
</feature>
<feature type="helix" evidence="4">
    <location>
        <begin position="35"/>
        <end position="50"/>
    </location>
</feature>
<dbReference type="EMBL" id="AC004136">
    <property type="protein sequence ID" value="AAC18935.1"/>
    <property type="molecule type" value="Genomic_DNA"/>
</dbReference>
<dbReference type="EMBL" id="CP002685">
    <property type="protein sequence ID" value="AEC05589.1"/>
    <property type="molecule type" value="Genomic_DNA"/>
</dbReference>
<dbReference type="EMBL" id="AY065171">
    <property type="protein sequence ID" value="AAL38347.1"/>
    <property type="molecule type" value="mRNA"/>
</dbReference>
<dbReference type="EMBL" id="AY114592">
    <property type="protein sequence ID" value="AAM47911.1"/>
    <property type="molecule type" value="mRNA"/>
</dbReference>
<dbReference type="EMBL" id="AK176744">
    <property type="protein sequence ID" value="BAD44507.1"/>
    <property type="molecule type" value="mRNA"/>
</dbReference>
<dbReference type="PIR" id="T00612">
    <property type="entry name" value="T00612"/>
</dbReference>
<dbReference type="RefSeq" id="NP_178355.1">
    <property type="nucleotide sequence ID" value="NM_126306.5"/>
</dbReference>
<dbReference type="PDB" id="7AQW">
    <property type="method" value="EM"/>
    <property type="resolution" value="3.17 A"/>
    <property type="chains" value="k=1-72"/>
</dbReference>
<dbReference type="PDB" id="7AR7">
    <property type="method" value="EM"/>
    <property type="resolution" value="3.72 A"/>
    <property type="chains" value="k=4-50"/>
</dbReference>
<dbReference type="PDB" id="7AR8">
    <property type="method" value="EM"/>
    <property type="resolution" value="3.53 A"/>
    <property type="chains" value="k=1-72"/>
</dbReference>
<dbReference type="PDB" id="7ARB">
    <property type="method" value="EM"/>
    <property type="resolution" value="3.41 A"/>
    <property type="chains" value="k=1-72"/>
</dbReference>
<dbReference type="PDB" id="8BEH">
    <property type="method" value="EM"/>
    <property type="resolution" value="2.29 A"/>
    <property type="chains" value="k=1-72"/>
</dbReference>
<dbReference type="PDB" id="8BPX">
    <property type="method" value="EM"/>
    <property type="resolution" value="2.09 A"/>
    <property type="chains" value="k=1-72"/>
</dbReference>
<dbReference type="PDB" id="8BQ5">
    <property type="method" value="EM"/>
    <property type="resolution" value="2.73 A"/>
    <property type="chains" value="k=1-72"/>
</dbReference>
<dbReference type="PDB" id="8BQ6">
    <property type="method" value="EM"/>
    <property type="resolution" value="2.80 A"/>
    <property type="chains" value="k=1-72"/>
</dbReference>
<dbReference type="PDBsum" id="7AQW"/>
<dbReference type="PDBsum" id="7AR7"/>
<dbReference type="PDBsum" id="7AR8"/>
<dbReference type="PDBsum" id="7ARB"/>
<dbReference type="PDBsum" id="8BEH"/>
<dbReference type="PDBsum" id="8BPX"/>
<dbReference type="PDBsum" id="8BQ5"/>
<dbReference type="PDBsum" id="8BQ6"/>
<dbReference type="EMDB" id="EMD-11874"/>
<dbReference type="EMDB" id="EMD-11875"/>
<dbReference type="EMDB" id="EMD-11876"/>
<dbReference type="EMDB" id="EMD-11878"/>
<dbReference type="EMDB" id="EMD-16003"/>
<dbReference type="EMDB" id="EMD-16168"/>
<dbReference type="EMDB" id="EMD-16171"/>
<dbReference type="EMDB" id="EMD-16172"/>
<dbReference type="SMR" id="O64725"/>
<dbReference type="BioGRID" id="183">
    <property type="interactions" value="1"/>
</dbReference>
<dbReference type="FunCoup" id="O64725">
    <property type="interactions" value="251"/>
</dbReference>
<dbReference type="IntAct" id="O64725">
    <property type="interactions" value="1"/>
</dbReference>
<dbReference type="STRING" id="3702.O64725"/>
<dbReference type="PaxDb" id="3702-AT2G02510.1"/>
<dbReference type="ProteomicsDB" id="251122"/>
<dbReference type="EnsemblPlants" id="AT2G02510.1">
    <property type="protein sequence ID" value="AT2G02510.1"/>
    <property type="gene ID" value="AT2G02510"/>
</dbReference>
<dbReference type="GeneID" id="814780"/>
<dbReference type="Gramene" id="AT2G02510.1">
    <property type="protein sequence ID" value="AT2G02510.1"/>
    <property type="gene ID" value="AT2G02510"/>
</dbReference>
<dbReference type="KEGG" id="ath:AT2G02510"/>
<dbReference type="Araport" id="AT2G02510"/>
<dbReference type="TAIR" id="AT2G02510"/>
<dbReference type="eggNOG" id="ENOG502S7DZ">
    <property type="taxonomic scope" value="Eukaryota"/>
</dbReference>
<dbReference type="HOGENOM" id="CLU_145518_3_0_1"/>
<dbReference type="InParanoid" id="O64725"/>
<dbReference type="OMA" id="NQIRHAT"/>
<dbReference type="PhylomeDB" id="O64725"/>
<dbReference type="PRO" id="PR:O64725"/>
<dbReference type="Proteomes" id="UP000006548">
    <property type="component" value="Chromosome 2"/>
</dbReference>
<dbReference type="ExpressionAtlas" id="O64725">
    <property type="expression patterns" value="baseline and differential"/>
</dbReference>
<dbReference type="GO" id="GO:0005743">
    <property type="term" value="C:mitochondrial inner membrane"/>
    <property type="evidence" value="ECO:0007669"/>
    <property type="project" value="UniProtKB-SubCell"/>
</dbReference>
<dbReference type="GO" id="GO:0005739">
    <property type="term" value="C:mitochondrion"/>
    <property type="evidence" value="ECO:0007005"/>
    <property type="project" value="TAIR"/>
</dbReference>
<dbReference type="GO" id="GO:0022900">
    <property type="term" value="P:electron transport chain"/>
    <property type="evidence" value="ECO:0007669"/>
    <property type="project" value="InterPro"/>
</dbReference>
<dbReference type="InterPro" id="IPR012576">
    <property type="entry name" value="NDUFB3"/>
</dbReference>
<dbReference type="PANTHER" id="PTHR15082:SF2">
    <property type="entry name" value="NADH DEHYDROGENASE [UBIQUINONE] 1 BETA SUBCOMPLEX SUBUNIT 3"/>
    <property type="match status" value="1"/>
</dbReference>
<dbReference type="PANTHER" id="PTHR15082">
    <property type="entry name" value="NADH-UBIQUINONE OXIDOREDUCTASE B12 SUBUNIT"/>
    <property type="match status" value="1"/>
</dbReference>
<dbReference type="Pfam" id="PF08122">
    <property type="entry name" value="NDUF_B12"/>
    <property type="match status" value="1"/>
</dbReference>
<keyword id="KW-0002">3D-structure</keyword>
<keyword id="KW-0249">Electron transport</keyword>
<keyword id="KW-0472">Membrane</keyword>
<keyword id="KW-0496">Mitochondrion</keyword>
<keyword id="KW-0999">Mitochondrion inner membrane</keyword>
<keyword id="KW-1185">Reference proteome</keyword>
<keyword id="KW-0679">Respiratory chain</keyword>
<keyword id="KW-0812">Transmembrane</keyword>
<keyword id="KW-1133">Transmembrane helix</keyword>
<keyword id="KW-0813">Transport</keyword>